<sequence>XNSQXEXPVA</sequence>
<protein>
    <recommendedName>
        <fullName>Unknown protein from spot 2D-000JYC of 2D-PAGE</fullName>
    </recommendedName>
</protein>
<accession>P99012</accession>
<name>UXB1_YEASX</name>
<reference key="1">
    <citation type="submission" date="1995-08" db="UniProtKB">
        <authorList>
            <person name="Sanchez J.-C."/>
            <person name="Golaz O."/>
            <person name="Schaller D."/>
            <person name="Morch F."/>
            <person name="Frutiger S."/>
            <person name="Hughes G.J."/>
            <person name="Appel R.D."/>
            <person name="Deshusses J."/>
            <person name="Hochstrasser D.F."/>
        </authorList>
    </citation>
    <scope>PROTEIN SEQUENCE</scope>
    <source>
        <strain>ATCC 26786 / X2180-1A</strain>
    </source>
</reference>
<organism>
    <name type="scientific">Saccharomyces cerevisiae</name>
    <name type="common">Baker's yeast</name>
    <dbReference type="NCBI Taxonomy" id="4932"/>
    <lineage>
        <taxon>Eukaryota</taxon>
        <taxon>Fungi</taxon>
        <taxon>Dikarya</taxon>
        <taxon>Ascomycota</taxon>
        <taxon>Saccharomycotina</taxon>
        <taxon>Saccharomycetes</taxon>
        <taxon>Saccharomycetales</taxon>
        <taxon>Saccharomycetaceae</taxon>
        <taxon>Saccharomyces</taxon>
    </lineage>
</organism>
<feature type="chain" id="PRO_0000055560" description="Unknown protein from spot 2D-000JYC of 2D-PAGE">
    <location>
        <begin position="1"/>
        <end position="10" status="greater than"/>
    </location>
</feature>
<feature type="non-terminal residue">
    <location>
        <position position="10"/>
    </location>
</feature>
<comment type="miscellaneous">
    <text>On the 2D-gel the determined pI of this unknown protein is: 5.71, its MW is: 12.4 kDa.</text>
</comment>
<keyword id="KW-0903">Direct protein sequencing</keyword>
<proteinExistence type="evidence at protein level"/>